<name>DNLJ_RUBXD</name>
<evidence type="ECO:0000255" key="1">
    <source>
        <dbReference type="HAMAP-Rule" id="MF_01588"/>
    </source>
</evidence>
<reference key="1">
    <citation type="submission" date="2006-06" db="EMBL/GenBank/DDBJ databases">
        <title>Complete sequence of Rubrobacter xylanophilus DSM 9941.</title>
        <authorList>
            <consortium name="US DOE Joint Genome Institute"/>
            <person name="Copeland A."/>
            <person name="Lucas S."/>
            <person name="Lapidus A."/>
            <person name="Barry K."/>
            <person name="Detter J.C."/>
            <person name="Glavina del Rio T."/>
            <person name="Hammon N."/>
            <person name="Israni S."/>
            <person name="Dalin E."/>
            <person name="Tice H."/>
            <person name="Pitluck S."/>
            <person name="Munk A.C."/>
            <person name="Brettin T."/>
            <person name="Bruce D."/>
            <person name="Han C."/>
            <person name="Tapia R."/>
            <person name="Gilna P."/>
            <person name="Schmutz J."/>
            <person name="Larimer F."/>
            <person name="Land M."/>
            <person name="Hauser L."/>
            <person name="Kyrpides N."/>
            <person name="Lykidis A."/>
            <person name="da Costa M.S."/>
            <person name="Rainey F.A."/>
            <person name="Empadinhas N."/>
            <person name="Jolivet E."/>
            <person name="Battista J.R."/>
            <person name="Richardson P."/>
        </authorList>
    </citation>
    <scope>NUCLEOTIDE SEQUENCE [LARGE SCALE GENOMIC DNA]</scope>
    <source>
        <strain>DSM 9941 / JCM 11954 / NBRC 16129 / PRD-1</strain>
    </source>
</reference>
<accession>Q1AZ75</accession>
<protein>
    <recommendedName>
        <fullName evidence="1">DNA ligase</fullName>
        <ecNumber evidence="1">6.5.1.2</ecNumber>
    </recommendedName>
    <alternativeName>
        <fullName evidence="1">Polydeoxyribonucleotide synthase [NAD(+)]</fullName>
    </alternativeName>
</protein>
<proteinExistence type="inferred from homology"/>
<gene>
    <name evidence="1" type="primary">ligA</name>
    <name type="ordered locus">Rxyl_0327</name>
</gene>
<comment type="function">
    <text evidence="1">DNA ligase that catalyzes the formation of phosphodiester linkages between 5'-phosphoryl and 3'-hydroxyl groups in double-stranded DNA using NAD as a coenzyme and as the energy source for the reaction. It is essential for DNA replication and repair of damaged DNA.</text>
</comment>
<comment type="catalytic activity">
    <reaction evidence="1">
        <text>NAD(+) + (deoxyribonucleotide)n-3'-hydroxyl + 5'-phospho-(deoxyribonucleotide)m = (deoxyribonucleotide)n+m + AMP + beta-nicotinamide D-nucleotide.</text>
        <dbReference type="EC" id="6.5.1.2"/>
    </reaction>
</comment>
<comment type="cofactor">
    <cofactor evidence="1">
        <name>Mg(2+)</name>
        <dbReference type="ChEBI" id="CHEBI:18420"/>
    </cofactor>
    <cofactor evidence="1">
        <name>Mn(2+)</name>
        <dbReference type="ChEBI" id="CHEBI:29035"/>
    </cofactor>
</comment>
<comment type="similarity">
    <text evidence="1">Belongs to the NAD-dependent DNA ligase family. LigA subfamily.</text>
</comment>
<keyword id="KW-0227">DNA damage</keyword>
<keyword id="KW-0234">DNA repair</keyword>
<keyword id="KW-0235">DNA replication</keyword>
<keyword id="KW-0436">Ligase</keyword>
<keyword id="KW-0460">Magnesium</keyword>
<keyword id="KW-0464">Manganese</keyword>
<keyword id="KW-0479">Metal-binding</keyword>
<keyword id="KW-0520">NAD</keyword>
<keyword id="KW-1185">Reference proteome</keyword>
<keyword id="KW-0862">Zinc</keyword>
<feature type="chain" id="PRO_0000313413" description="DNA ligase">
    <location>
        <begin position="1"/>
        <end position="685"/>
    </location>
</feature>
<feature type="domain" description="BRCT" evidence="1">
    <location>
        <begin position="603"/>
        <end position="685"/>
    </location>
</feature>
<feature type="active site" description="N6-AMP-lysine intermediate" evidence="1">
    <location>
        <position position="133"/>
    </location>
</feature>
<feature type="binding site" evidence="1">
    <location>
        <begin position="48"/>
        <end position="52"/>
    </location>
    <ligand>
        <name>NAD(+)</name>
        <dbReference type="ChEBI" id="CHEBI:57540"/>
    </ligand>
</feature>
<feature type="binding site" evidence="1">
    <location>
        <begin position="97"/>
        <end position="98"/>
    </location>
    <ligand>
        <name>NAD(+)</name>
        <dbReference type="ChEBI" id="CHEBI:57540"/>
    </ligand>
</feature>
<feature type="binding site" evidence="1">
    <location>
        <position position="131"/>
    </location>
    <ligand>
        <name>NAD(+)</name>
        <dbReference type="ChEBI" id="CHEBI:57540"/>
    </ligand>
</feature>
<feature type="binding site" evidence="1">
    <location>
        <position position="154"/>
    </location>
    <ligand>
        <name>NAD(+)</name>
        <dbReference type="ChEBI" id="CHEBI:57540"/>
    </ligand>
</feature>
<feature type="binding site" evidence="1">
    <location>
        <position position="190"/>
    </location>
    <ligand>
        <name>NAD(+)</name>
        <dbReference type="ChEBI" id="CHEBI:57540"/>
    </ligand>
</feature>
<feature type="binding site" evidence="1">
    <location>
        <position position="304"/>
    </location>
    <ligand>
        <name>NAD(+)</name>
        <dbReference type="ChEBI" id="CHEBI:57540"/>
    </ligand>
</feature>
<feature type="binding site" evidence="1">
    <location>
        <position position="328"/>
    </location>
    <ligand>
        <name>NAD(+)</name>
        <dbReference type="ChEBI" id="CHEBI:57540"/>
    </ligand>
</feature>
<feature type="binding site" evidence="1">
    <location>
        <position position="422"/>
    </location>
    <ligand>
        <name>Zn(2+)</name>
        <dbReference type="ChEBI" id="CHEBI:29105"/>
    </ligand>
</feature>
<feature type="binding site" evidence="1">
    <location>
        <position position="425"/>
    </location>
    <ligand>
        <name>Zn(2+)</name>
        <dbReference type="ChEBI" id="CHEBI:29105"/>
    </ligand>
</feature>
<feature type="binding site" evidence="1">
    <location>
        <position position="440"/>
    </location>
    <ligand>
        <name>Zn(2+)</name>
        <dbReference type="ChEBI" id="CHEBI:29105"/>
    </ligand>
</feature>
<feature type="binding site" evidence="1">
    <location>
        <position position="445"/>
    </location>
    <ligand>
        <name>Zn(2+)</name>
        <dbReference type="ChEBI" id="CHEBI:29105"/>
    </ligand>
</feature>
<sequence length="685" mass="76996">MGAPTLPRIIPPVAEKLAEARQRVEELREQIRYHNRKYYVEDAPEISDAEYDALYRELEELESRFPELVTPDSPTQRVGGEPLEEFEEVRHAVPMLSLQNARRVEELREWDARVRRLLGPEEEGRLRYVTELKIDGLAVSLRYENGRLVRGATRGNGFVGEDVTRQLRTIRSVPDRLDDDPPGVLEPRGEVYIKLKDFEEFNRRRQERGERPFANPRNLAAGSVRQLDPRVTARRPLTIYLYGVGEGYENFESHSEALAALRRYGLRVNPHTVHGDIDSVIEECGRWAKKREALDFQVDGVVVKVDSREQQERLGAVQKAPRWAIAYKFEPLAGRTRLRDIVVTVGRTGALTPQAVLEPVNVGGVTISRATLHNEDYIKEKGILIGDTVIVERAGDVIPQVVRPVPEERDGDEEEFRMPERCPVCGERVSRPEGEAITRCANVRCPAQALEHIIHWASRGAMDIEGLGEKLARKLFDLGLIRDVADLYELRAEQLAPLEGLGEKSAQNLIRAIERSKERPFDRVLFGLGIRHVGSATAELIAERFSGEELLRGVGVEELTQIEGVGEIVARAVVEYFSLEENRKLVRRLMEHGLNFGPVRGKPEEGPLSGRRLVITGTLSRPRSEISDLIEGAGGTVTSSVSRNTDYLVAGENPGSKLERARELGVPVLDEEGLRRLLSGEERPG</sequence>
<organism>
    <name type="scientific">Rubrobacter xylanophilus (strain DSM 9941 / JCM 11954 / NBRC 16129 / PRD-1)</name>
    <dbReference type="NCBI Taxonomy" id="266117"/>
    <lineage>
        <taxon>Bacteria</taxon>
        <taxon>Bacillati</taxon>
        <taxon>Actinomycetota</taxon>
        <taxon>Rubrobacteria</taxon>
        <taxon>Rubrobacterales</taxon>
        <taxon>Rubrobacteraceae</taxon>
        <taxon>Rubrobacter</taxon>
    </lineage>
</organism>
<dbReference type="EC" id="6.5.1.2" evidence="1"/>
<dbReference type="EMBL" id="CP000386">
    <property type="protein sequence ID" value="ABG03303.1"/>
    <property type="molecule type" value="Genomic_DNA"/>
</dbReference>
<dbReference type="RefSeq" id="WP_011563321.1">
    <property type="nucleotide sequence ID" value="NC_008148.1"/>
</dbReference>
<dbReference type="SMR" id="Q1AZ75"/>
<dbReference type="STRING" id="266117.Rxyl_0327"/>
<dbReference type="KEGG" id="rxy:Rxyl_0327"/>
<dbReference type="eggNOG" id="COG0272">
    <property type="taxonomic scope" value="Bacteria"/>
</dbReference>
<dbReference type="HOGENOM" id="CLU_007764_2_1_11"/>
<dbReference type="OrthoDB" id="9759736at2"/>
<dbReference type="PhylomeDB" id="Q1AZ75"/>
<dbReference type="Proteomes" id="UP000006637">
    <property type="component" value="Chromosome"/>
</dbReference>
<dbReference type="GO" id="GO:0005829">
    <property type="term" value="C:cytosol"/>
    <property type="evidence" value="ECO:0007669"/>
    <property type="project" value="TreeGrafter"/>
</dbReference>
<dbReference type="GO" id="GO:0003677">
    <property type="term" value="F:DNA binding"/>
    <property type="evidence" value="ECO:0007669"/>
    <property type="project" value="InterPro"/>
</dbReference>
<dbReference type="GO" id="GO:0003911">
    <property type="term" value="F:DNA ligase (NAD+) activity"/>
    <property type="evidence" value="ECO:0007669"/>
    <property type="project" value="UniProtKB-UniRule"/>
</dbReference>
<dbReference type="GO" id="GO:0046872">
    <property type="term" value="F:metal ion binding"/>
    <property type="evidence" value="ECO:0007669"/>
    <property type="project" value="UniProtKB-KW"/>
</dbReference>
<dbReference type="GO" id="GO:0006281">
    <property type="term" value="P:DNA repair"/>
    <property type="evidence" value="ECO:0007669"/>
    <property type="project" value="UniProtKB-KW"/>
</dbReference>
<dbReference type="GO" id="GO:0006260">
    <property type="term" value="P:DNA replication"/>
    <property type="evidence" value="ECO:0007669"/>
    <property type="project" value="UniProtKB-KW"/>
</dbReference>
<dbReference type="CDD" id="cd17748">
    <property type="entry name" value="BRCT_DNA_ligase_like"/>
    <property type="match status" value="1"/>
</dbReference>
<dbReference type="CDD" id="cd00114">
    <property type="entry name" value="LIGANc"/>
    <property type="match status" value="1"/>
</dbReference>
<dbReference type="FunFam" id="1.10.150.20:FF:000006">
    <property type="entry name" value="DNA ligase"/>
    <property type="match status" value="1"/>
</dbReference>
<dbReference type="FunFam" id="1.10.150.20:FF:000007">
    <property type="entry name" value="DNA ligase"/>
    <property type="match status" value="1"/>
</dbReference>
<dbReference type="FunFam" id="1.10.287.610:FF:000002">
    <property type="entry name" value="DNA ligase"/>
    <property type="match status" value="1"/>
</dbReference>
<dbReference type="FunFam" id="2.40.50.140:FF:000012">
    <property type="entry name" value="DNA ligase"/>
    <property type="match status" value="1"/>
</dbReference>
<dbReference type="FunFam" id="3.30.470.30:FF:000001">
    <property type="entry name" value="DNA ligase"/>
    <property type="match status" value="1"/>
</dbReference>
<dbReference type="Gene3D" id="6.20.10.30">
    <property type="match status" value="1"/>
</dbReference>
<dbReference type="Gene3D" id="1.10.150.20">
    <property type="entry name" value="5' to 3' exonuclease, C-terminal subdomain"/>
    <property type="match status" value="2"/>
</dbReference>
<dbReference type="Gene3D" id="3.40.50.10190">
    <property type="entry name" value="BRCT domain"/>
    <property type="match status" value="1"/>
</dbReference>
<dbReference type="Gene3D" id="3.30.470.30">
    <property type="entry name" value="DNA ligase/mRNA capping enzyme"/>
    <property type="match status" value="1"/>
</dbReference>
<dbReference type="Gene3D" id="1.10.287.610">
    <property type="entry name" value="Helix hairpin bin"/>
    <property type="match status" value="1"/>
</dbReference>
<dbReference type="Gene3D" id="2.40.50.140">
    <property type="entry name" value="Nucleic acid-binding proteins"/>
    <property type="match status" value="1"/>
</dbReference>
<dbReference type="HAMAP" id="MF_01588">
    <property type="entry name" value="DNA_ligase_A"/>
    <property type="match status" value="1"/>
</dbReference>
<dbReference type="InterPro" id="IPR001357">
    <property type="entry name" value="BRCT_dom"/>
</dbReference>
<dbReference type="InterPro" id="IPR036420">
    <property type="entry name" value="BRCT_dom_sf"/>
</dbReference>
<dbReference type="InterPro" id="IPR041663">
    <property type="entry name" value="DisA/LigA_HHH"/>
</dbReference>
<dbReference type="InterPro" id="IPR001679">
    <property type="entry name" value="DNA_ligase"/>
</dbReference>
<dbReference type="InterPro" id="IPR018239">
    <property type="entry name" value="DNA_ligase_AS"/>
</dbReference>
<dbReference type="InterPro" id="IPR013839">
    <property type="entry name" value="DNAligase_adenylation"/>
</dbReference>
<dbReference type="InterPro" id="IPR013840">
    <property type="entry name" value="DNAligase_N"/>
</dbReference>
<dbReference type="InterPro" id="IPR003583">
    <property type="entry name" value="Hlx-hairpin-Hlx_DNA-bd_motif"/>
</dbReference>
<dbReference type="InterPro" id="IPR012340">
    <property type="entry name" value="NA-bd_OB-fold"/>
</dbReference>
<dbReference type="InterPro" id="IPR004150">
    <property type="entry name" value="NAD_DNA_ligase_OB"/>
</dbReference>
<dbReference type="InterPro" id="IPR010994">
    <property type="entry name" value="RuvA_2-like"/>
</dbReference>
<dbReference type="InterPro" id="IPR004149">
    <property type="entry name" value="Znf_DNAligase_C4"/>
</dbReference>
<dbReference type="NCBIfam" id="TIGR00575">
    <property type="entry name" value="dnlj"/>
    <property type="match status" value="1"/>
</dbReference>
<dbReference type="NCBIfam" id="NF005932">
    <property type="entry name" value="PRK07956.1"/>
    <property type="match status" value="1"/>
</dbReference>
<dbReference type="PANTHER" id="PTHR23389">
    <property type="entry name" value="CHROMOSOME TRANSMISSION FIDELITY FACTOR 18"/>
    <property type="match status" value="1"/>
</dbReference>
<dbReference type="PANTHER" id="PTHR23389:SF9">
    <property type="entry name" value="DNA LIGASE"/>
    <property type="match status" value="1"/>
</dbReference>
<dbReference type="Pfam" id="PF00533">
    <property type="entry name" value="BRCT"/>
    <property type="match status" value="1"/>
</dbReference>
<dbReference type="Pfam" id="PF01653">
    <property type="entry name" value="DNA_ligase_aden"/>
    <property type="match status" value="1"/>
</dbReference>
<dbReference type="Pfam" id="PF03120">
    <property type="entry name" value="DNA_ligase_OB"/>
    <property type="match status" value="1"/>
</dbReference>
<dbReference type="Pfam" id="PF03119">
    <property type="entry name" value="DNA_ligase_ZBD"/>
    <property type="match status" value="1"/>
</dbReference>
<dbReference type="Pfam" id="PF12826">
    <property type="entry name" value="HHH_2"/>
    <property type="match status" value="1"/>
</dbReference>
<dbReference type="Pfam" id="PF14520">
    <property type="entry name" value="HHH_5"/>
    <property type="match status" value="1"/>
</dbReference>
<dbReference type="Pfam" id="PF22745">
    <property type="entry name" value="Nlig-Ia"/>
    <property type="match status" value="1"/>
</dbReference>
<dbReference type="PIRSF" id="PIRSF001604">
    <property type="entry name" value="LigA"/>
    <property type="match status" value="1"/>
</dbReference>
<dbReference type="SMART" id="SM00292">
    <property type="entry name" value="BRCT"/>
    <property type="match status" value="1"/>
</dbReference>
<dbReference type="SMART" id="SM00278">
    <property type="entry name" value="HhH1"/>
    <property type="match status" value="3"/>
</dbReference>
<dbReference type="SMART" id="SM00532">
    <property type="entry name" value="LIGANc"/>
    <property type="match status" value="1"/>
</dbReference>
<dbReference type="SUPFAM" id="SSF52113">
    <property type="entry name" value="BRCT domain"/>
    <property type="match status" value="1"/>
</dbReference>
<dbReference type="SUPFAM" id="SSF56091">
    <property type="entry name" value="DNA ligase/mRNA capping enzyme, catalytic domain"/>
    <property type="match status" value="1"/>
</dbReference>
<dbReference type="SUPFAM" id="SSF50249">
    <property type="entry name" value="Nucleic acid-binding proteins"/>
    <property type="match status" value="1"/>
</dbReference>
<dbReference type="SUPFAM" id="SSF47781">
    <property type="entry name" value="RuvA domain 2-like"/>
    <property type="match status" value="1"/>
</dbReference>
<dbReference type="PROSITE" id="PS50172">
    <property type="entry name" value="BRCT"/>
    <property type="match status" value="1"/>
</dbReference>
<dbReference type="PROSITE" id="PS01055">
    <property type="entry name" value="DNA_LIGASE_N1"/>
    <property type="match status" value="1"/>
</dbReference>